<reference key="1">
    <citation type="journal article" date="2013" name="Plant Physiol.">
        <title>A Nostoc punctiforme Sugar Transporter Necessary to Establish a Cyanobacterium-Plant Symbiosis.</title>
        <authorList>
            <person name="Ekman M."/>
            <person name="Picossi S."/>
            <person name="Campbell E.L."/>
            <person name="Meeks J.C."/>
            <person name="Flores E."/>
        </authorList>
    </citation>
    <scope>NUCLEOTIDE SEQUENCE [LARGE SCALE GENOMIC DNA]</scope>
    <source>
        <strain>ATCC 29133 / PCC 73102</strain>
    </source>
</reference>
<comment type="similarity">
    <text evidence="1">Belongs to the universal ribosomal protein uS2 family.</text>
</comment>
<proteinExistence type="inferred from homology"/>
<protein>
    <recommendedName>
        <fullName evidence="1">Small ribosomal subunit protein uS2</fullName>
    </recommendedName>
    <alternativeName>
        <fullName evidence="3">30S ribosomal protein S2</fullName>
    </alternativeName>
</protein>
<gene>
    <name evidence="1" type="primary">rpsB</name>
    <name evidence="1" type="synonym">rps2</name>
    <name type="ordered locus">Npun_R5570</name>
</gene>
<dbReference type="EMBL" id="CP001037">
    <property type="protein sequence ID" value="ACC83875.1"/>
    <property type="molecule type" value="Genomic_DNA"/>
</dbReference>
<dbReference type="RefSeq" id="WP_012411819.1">
    <property type="nucleotide sequence ID" value="NC_010628.1"/>
</dbReference>
<dbReference type="SMR" id="B2J6U9"/>
<dbReference type="STRING" id="63737.Npun_R5570"/>
<dbReference type="EnsemblBacteria" id="ACC83875">
    <property type="protein sequence ID" value="ACC83875"/>
    <property type="gene ID" value="Npun_R5570"/>
</dbReference>
<dbReference type="KEGG" id="npu:Npun_R5570"/>
<dbReference type="eggNOG" id="COG0052">
    <property type="taxonomic scope" value="Bacteria"/>
</dbReference>
<dbReference type="HOGENOM" id="CLU_040318_1_2_3"/>
<dbReference type="OrthoDB" id="9808036at2"/>
<dbReference type="PhylomeDB" id="B2J6U9"/>
<dbReference type="Proteomes" id="UP000001191">
    <property type="component" value="Chromosome"/>
</dbReference>
<dbReference type="GO" id="GO:0022627">
    <property type="term" value="C:cytosolic small ribosomal subunit"/>
    <property type="evidence" value="ECO:0007669"/>
    <property type="project" value="TreeGrafter"/>
</dbReference>
<dbReference type="GO" id="GO:0003735">
    <property type="term" value="F:structural constituent of ribosome"/>
    <property type="evidence" value="ECO:0007669"/>
    <property type="project" value="InterPro"/>
</dbReference>
<dbReference type="GO" id="GO:0006412">
    <property type="term" value="P:translation"/>
    <property type="evidence" value="ECO:0007669"/>
    <property type="project" value="UniProtKB-UniRule"/>
</dbReference>
<dbReference type="CDD" id="cd01425">
    <property type="entry name" value="RPS2"/>
    <property type="match status" value="1"/>
</dbReference>
<dbReference type="FunFam" id="1.10.287.610:FF:000001">
    <property type="entry name" value="30S ribosomal protein S2"/>
    <property type="match status" value="1"/>
</dbReference>
<dbReference type="Gene3D" id="3.40.50.10490">
    <property type="entry name" value="Glucose-6-phosphate isomerase like protein, domain 1"/>
    <property type="match status" value="1"/>
</dbReference>
<dbReference type="Gene3D" id="1.10.287.610">
    <property type="entry name" value="Helix hairpin bin"/>
    <property type="match status" value="1"/>
</dbReference>
<dbReference type="HAMAP" id="MF_00291_B">
    <property type="entry name" value="Ribosomal_uS2_B"/>
    <property type="match status" value="1"/>
</dbReference>
<dbReference type="InterPro" id="IPR001865">
    <property type="entry name" value="Ribosomal_uS2"/>
</dbReference>
<dbReference type="InterPro" id="IPR005706">
    <property type="entry name" value="Ribosomal_uS2_bac/mit/plastid"/>
</dbReference>
<dbReference type="InterPro" id="IPR018130">
    <property type="entry name" value="Ribosomal_uS2_CS"/>
</dbReference>
<dbReference type="InterPro" id="IPR023591">
    <property type="entry name" value="Ribosomal_uS2_flav_dom_sf"/>
</dbReference>
<dbReference type="NCBIfam" id="TIGR01011">
    <property type="entry name" value="rpsB_bact"/>
    <property type="match status" value="1"/>
</dbReference>
<dbReference type="PANTHER" id="PTHR12534">
    <property type="entry name" value="30S RIBOSOMAL PROTEIN S2 PROKARYOTIC AND ORGANELLAR"/>
    <property type="match status" value="1"/>
</dbReference>
<dbReference type="PANTHER" id="PTHR12534:SF0">
    <property type="entry name" value="SMALL RIBOSOMAL SUBUNIT PROTEIN US2M"/>
    <property type="match status" value="1"/>
</dbReference>
<dbReference type="Pfam" id="PF00318">
    <property type="entry name" value="Ribosomal_S2"/>
    <property type="match status" value="1"/>
</dbReference>
<dbReference type="PRINTS" id="PR00395">
    <property type="entry name" value="RIBOSOMALS2"/>
</dbReference>
<dbReference type="SUPFAM" id="SSF52313">
    <property type="entry name" value="Ribosomal protein S2"/>
    <property type="match status" value="1"/>
</dbReference>
<dbReference type="PROSITE" id="PS00962">
    <property type="entry name" value="RIBOSOMAL_S2_1"/>
    <property type="match status" value="1"/>
</dbReference>
<dbReference type="PROSITE" id="PS00963">
    <property type="entry name" value="RIBOSOMAL_S2_2"/>
    <property type="match status" value="1"/>
</dbReference>
<feature type="chain" id="PRO_1000115037" description="Small ribosomal subunit protein uS2">
    <location>
        <begin position="1"/>
        <end position="264"/>
    </location>
</feature>
<feature type="region of interest" description="Disordered" evidence="2">
    <location>
        <begin position="228"/>
        <end position="264"/>
    </location>
</feature>
<feature type="compositionally biased region" description="Acidic residues" evidence="2">
    <location>
        <begin position="230"/>
        <end position="264"/>
    </location>
</feature>
<accession>B2J6U9</accession>
<sequence length="264" mass="30251">MPVVSLAQMMESGVHFGHQTRRWNPKMSPYIYTSRNGVHIIDLVQTAQLMDNAYNYMRSHAEQGKKFLFVGTKRQAAGIIAQEASRCGSHYINQRWLGGMLTNWATIKTRVDRLKDLERREETGALDLLPKKEASMLRREMTKLQKYLGGIKTMRKVPDIVVIVDQRREYNAVQECQKLNIPIVSMLDTNCDPDVVDIPIPANDDAIRSIKLIVGKLADAIYEGRHGQLDAEDDYEDYDGSEYDDDYEETEYTDAVIPDEETEE</sequence>
<organism>
    <name type="scientific">Nostoc punctiforme (strain ATCC 29133 / PCC 73102)</name>
    <dbReference type="NCBI Taxonomy" id="63737"/>
    <lineage>
        <taxon>Bacteria</taxon>
        <taxon>Bacillati</taxon>
        <taxon>Cyanobacteriota</taxon>
        <taxon>Cyanophyceae</taxon>
        <taxon>Nostocales</taxon>
        <taxon>Nostocaceae</taxon>
        <taxon>Nostoc</taxon>
    </lineage>
</organism>
<evidence type="ECO:0000255" key="1">
    <source>
        <dbReference type="HAMAP-Rule" id="MF_00291"/>
    </source>
</evidence>
<evidence type="ECO:0000256" key="2">
    <source>
        <dbReference type="SAM" id="MobiDB-lite"/>
    </source>
</evidence>
<evidence type="ECO:0000305" key="3"/>
<name>RS2_NOSP7</name>
<keyword id="KW-1185">Reference proteome</keyword>
<keyword id="KW-0687">Ribonucleoprotein</keyword>
<keyword id="KW-0689">Ribosomal protein</keyword>